<organism>
    <name type="scientific">Mycobacterium leprae (strain TN)</name>
    <dbReference type="NCBI Taxonomy" id="272631"/>
    <lineage>
        <taxon>Bacteria</taxon>
        <taxon>Bacillati</taxon>
        <taxon>Actinomycetota</taxon>
        <taxon>Actinomycetes</taxon>
        <taxon>Mycobacteriales</taxon>
        <taxon>Mycobacteriaceae</taxon>
        <taxon>Mycobacterium</taxon>
    </lineage>
</organism>
<name>PYRG_MYCLE</name>
<gene>
    <name evidence="1" type="primary">pyrG</name>
    <name type="ordered locus">ML1363</name>
    <name type="ORF">MLC1351.09c</name>
</gene>
<accession>P53529</accession>
<feature type="chain" id="PRO_0000138201" description="CTP synthase">
    <location>
        <begin position="1"/>
        <end position="590"/>
    </location>
</feature>
<feature type="domain" description="Glutamine amidotransferase type-1" evidence="1">
    <location>
        <begin position="303"/>
        <end position="551"/>
    </location>
</feature>
<feature type="region of interest" description="Amidoligase domain" evidence="1">
    <location>
        <begin position="1"/>
        <end position="278"/>
    </location>
</feature>
<feature type="region of interest" description="Disordered" evidence="2">
    <location>
        <begin position="566"/>
        <end position="590"/>
    </location>
</feature>
<feature type="active site" description="Nucleophile; for glutamine hydrolysis" evidence="1">
    <location>
        <position position="393"/>
    </location>
</feature>
<feature type="active site" evidence="1">
    <location>
        <position position="524"/>
    </location>
</feature>
<feature type="active site" evidence="1">
    <location>
        <position position="526"/>
    </location>
</feature>
<feature type="binding site" evidence="1">
    <location>
        <position position="20"/>
    </location>
    <ligand>
        <name>CTP</name>
        <dbReference type="ChEBI" id="CHEBI:37563"/>
        <note>allosteric inhibitor</note>
    </ligand>
</feature>
<feature type="binding site" evidence="1">
    <location>
        <position position="20"/>
    </location>
    <ligand>
        <name>UTP</name>
        <dbReference type="ChEBI" id="CHEBI:46398"/>
    </ligand>
</feature>
<feature type="binding site" evidence="1">
    <location>
        <begin position="21"/>
        <end position="26"/>
    </location>
    <ligand>
        <name>ATP</name>
        <dbReference type="ChEBI" id="CHEBI:30616"/>
    </ligand>
</feature>
<feature type="binding site" evidence="1">
    <location>
        <position position="78"/>
    </location>
    <ligand>
        <name>ATP</name>
        <dbReference type="ChEBI" id="CHEBI:30616"/>
    </ligand>
</feature>
<feature type="binding site" evidence="1">
    <location>
        <position position="78"/>
    </location>
    <ligand>
        <name>Mg(2+)</name>
        <dbReference type="ChEBI" id="CHEBI:18420"/>
    </ligand>
</feature>
<feature type="binding site" evidence="1">
    <location>
        <position position="152"/>
    </location>
    <ligand>
        <name>Mg(2+)</name>
        <dbReference type="ChEBI" id="CHEBI:18420"/>
    </ligand>
</feature>
<feature type="binding site" evidence="1">
    <location>
        <begin position="159"/>
        <end position="161"/>
    </location>
    <ligand>
        <name>CTP</name>
        <dbReference type="ChEBI" id="CHEBI:37563"/>
        <note>allosteric inhibitor</note>
    </ligand>
</feature>
<feature type="binding site" evidence="1">
    <location>
        <begin position="199"/>
        <end position="204"/>
    </location>
    <ligand>
        <name>CTP</name>
        <dbReference type="ChEBI" id="CHEBI:37563"/>
        <note>allosteric inhibitor</note>
    </ligand>
</feature>
<feature type="binding site" evidence="1">
    <location>
        <begin position="199"/>
        <end position="204"/>
    </location>
    <ligand>
        <name>UTP</name>
        <dbReference type="ChEBI" id="CHEBI:46398"/>
    </ligand>
</feature>
<feature type="binding site" evidence="1">
    <location>
        <position position="235"/>
    </location>
    <ligand>
        <name>CTP</name>
        <dbReference type="ChEBI" id="CHEBI:37563"/>
        <note>allosteric inhibitor</note>
    </ligand>
</feature>
<feature type="binding site" evidence="1">
    <location>
        <position position="235"/>
    </location>
    <ligand>
        <name>UTP</name>
        <dbReference type="ChEBI" id="CHEBI:46398"/>
    </ligand>
</feature>
<feature type="binding site" evidence="1">
    <location>
        <position position="366"/>
    </location>
    <ligand>
        <name>L-glutamine</name>
        <dbReference type="ChEBI" id="CHEBI:58359"/>
    </ligand>
</feature>
<feature type="binding site" evidence="1">
    <location>
        <begin position="394"/>
        <end position="397"/>
    </location>
    <ligand>
        <name>L-glutamine</name>
        <dbReference type="ChEBI" id="CHEBI:58359"/>
    </ligand>
</feature>
<feature type="binding site" evidence="1">
    <location>
        <position position="416"/>
    </location>
    <ligand>
        <name>L-glutamine</name>
        <dbReference type="ChEBI" id="CHEBI:58359"/>
    </ligand>
</feature>
<feature type="binding site" evidence="1">
    <location>
        <position position="477"/>
    </location>
    <ligand>
        <name>L-glutamine</name>
        <dbReference type="ChEBI" id="CHEBI:58359"/>
    </ligand>
</feature>
<proteinExistence type="inferred from homology"/>
<keyword id="KW-0067">ATP-binding</keyword>
<keyword id="KW-0315">Glutamine amidotransferase</keyword>
<keyword id="KW-0436">Ligase</keyword>
<keyword id="KW-0460">Magnesium</keyword>
<keyword id="KW-0479">Metal-binding</keyword>
<keyword id="KW-0547">Nucleotide-binding</keyword>
<keyword id="KW-0665">Pyrimidine biosynthesis</keyword>
<keyword id="KW-1185">Reference proteome</keyword>
<sequence length="590" mass="64082">MRKHPQSATKHLFVSGGVASSLGKGLTASSLGQLLTARGLHVTMQKLDPYLNVDPGTMNPFQHGEVFVTEDGAETDLDVGHYERFLDRDLSGSANVTTGQVYSTVIAKERRGEYLGDTVQVIPHITDEIKQRIMAMAQPDGGDNRPDVVITEIGGTVGDIESQPFLEAARQVRHDLGRENVFFLHVSLVPHLAPSGELKTKPTQHSVAALRSIGITPDALILRCDRDVPESLKNKIALMCDVDIDGVISTPDAPSIYDIPKVLHREELDAFVVRRLNLPFRDVDWTEWDDLLRRVHEPHGTVRIALVGKYVDFSDAYLSVSEALHAGGFKHYAKVEVVWVASDDCETATGAAAVLADVHGVLIPGGFGIRGIEGKIGAIRYARARGLPVLGLCLGLQCIVIEATRSVGLVQANSAEFEPATPDPVISTMADQKEIVAGEADFGGTMRLGAYPAVLQPASIVAQAYGTTQVSERHRHRYEVNNAYRDWIAESGLRISGTSPDGYLVEFVEYPANMHPFVVGTQAHPELKSRPTRPHPLFVAFVGAAIDYKSAELLPVEIPAVPEISEHLPNSSNQHRDGVERSFPAPAARG</sequence>
<evidence type="ECO:0000255" key="1">
    <source>
        <dbReference type="HAMAP-Rule" id="MF_01227"/>
    </source>
</evidence>
<evidence type="ECO:0000256" key="2">
    <source>
        <dbReference type="SAM" id="MobiDB-lite"/>
    </source>
</evidence>
<protein>
    <recommendedName>
        <fullName evidence="1">CTP synthase</fullName>
        <ecNumber evidence="1">6.3.4.2</ecNumber>
    </recommendedName>
    <alternativeName>
        <fullName evidence="1">Cytidine 5'-triphosphate synthase</fullName>
    </alternativeName>
    <alternativeName>
        <fullName evidence="1">Cytidine triphosphate synthetase</fullName>
        <shortName evidence="1">CTP synthetase</shortName>
        <shortName evidence="1">CTPS</shortName>
    </alternativeName>
    <alternativeName>
        <fullName evidence="1">UTP--ammonia ligase</fullName>
    </alternativeName>
</protein>
<reference key="1">
    <citation type="submission" date="1994-09" db="EMBL/GenBank/DDBJ databases">
        <authorList>
            <person name="Smith D.R."/>
            <person name="Robison K."/>
        </authorList>
    </citation>
    <scope>NUCLEOTIDE SEQUENCE [GENOMIC DNA]</scope>
</reference>
<reference key="2">
    <citation type="journal article" date="2001" name="Nature">
        <title>Massive gene decay in the leprosy bacillus.</title>
        <authorList>
            <person name="Cole S.T."/>
            <person name="Eiglmeier K."/>
            <person name="Parkhill J."/>
            <person name="James K.D."/>
            <person name="Thomson N.R."/>
            <person name="Wheeler P.R."/>
            <person name="Honore N."/>
            <person name="Garnier T."/>
            <person name="Churcher C.M."/>
            <person name="Harris D.E."/>
            <person name="Mungall K.L."/>
            <person name="Basham D."/>
            <person name="Brown D."/>
            <person name="Chillingworth T."/>
            <person name="Connor R."/>
            <person name="Davies R.M."/>
            <person name="Devlin K."/>
            <person name="Duthoy S."/>
            <person name="Feltwell T."/>
            <person name="Fraser A."/>
            <person name="Hamlin N."/>
            <person name="Holroyd S."/>
            <person name="Hornsby T."/>
            <person name="Jagels K."/>
            <person name="Lacroix C."/>
            <person name="Maclean J."/>
            <person name="Moule S."/>
            <person name="Murphy L.D."/>
            <person name="Oliver K."/>
            <person name="Quail M.A."/>
            <person name="Rajandream M.A."/>
            <person name="Rutherford K.M."/>
            <person name="Rutter S."/>
            <person name="Seeger K."/>
            <person name="Simon S."/>
            <person name="Simmonds M."/>
            <person name="Skelton J."/>
            <person name="Squares R."/>
            <person name="Squares S."/>
            <person name="Stevens K."/>
            <person name="Taylor K."/>
            <person name="Whitehead S."/>
            <person name="Woodward J.R."/>
            <person name="Barrell B.G."/>
        </authorList>
    </citation>
    <scope>NUCLEOTIDE SEQUENCE [LARGE SCALE GENOMIC DNA]</scope>
    <source>
        <strain>TN</strain>
    </source>
</reference>
<comment type="function">
    <text evidence="1">Catalyzes the ATP-dependent amination of UTP to CTP with either L-glutamine or ammonia as the source of nitrogen. Regulates intracellular CTP levels through interactions with the four ribonucleotide triphosphates.</text>
</comment>
<comment type="catalytic activity">
    <reaction evidence="1">
        <text>UTP + L-glutamine + ATP + H2O = CTP + L-glutamate + ADP + phosphate + 2 H(+)</text>
        <dbReference type="Rhea" id="RHEA:26426"/>
        <dbReference type="ChEBI" id="CHEBI:15377"/>
        <dbReference type="ChEBI" id="CHEBI:15378"/>
        <dbReference type="ChEBI" id="CHEBI:29985"/>
        <dbReference type="ChEBI" id="CHEBI:30616"/>
        <dbReference type="ChEBI" id="CHEBI:37563"/>
        <dbReference type="ChEBI" id="CHEBI:43474"/>
        <dbReference type="ChEBI" id="CHEBI:46398"/>
        <dbReference type="ChEBI" id="CHEBI:58359"/>
        <dbReference type="ChEBI" id="CHEBI:456216"/>
        <dbReference type="EC" id="6.3.4.2"/>
    </reaction>
</comment>
<comment type="catalytic activity">
    <reaction evidence="1">
        <text>L-glutamine + H2O = L-glutamate + NH4(+)</text>
        <dbReference type="Rhea" id="RHEA:15889"/>
        <dbReference type="ChEBI" id="CHEBI:15377"/>
        <dbReference type="ChEBI" id="CHEBI:28938"/>
        <dbReference type="ChEBI" id="CHEBI:29985"/>
        <dbReference type="ChEBI" id="CHEBI:58359"/>
    </reaction>
</comment>
<comment type="catalytic activity">
    <reaction evidence="1">
        <text>UTP + NH4(+) + ATP = CTP + ADP + phosphate + 2 H(+)</text>
        <dbReference type="Rhea" id="RHEA:16597"/>
        <dbReference type="ChEBI" id="CHEBI:15378"/>
        <dbReference type="ChEBI" id="CHEBI:28938"/>
        <dbReference type="ChEBI" id="CHEBI:30616"/>
        <dbReference type="ChEBI" id="CHEBI:37563"/>
        <dbReference type="ChEBI" id="CHEBI:43474"/>
        <dbReference type="ChEBI" id="CHEBI:46398"/>
        <dbReference type="ChEBI" id="CHEBI:456216"/>
    </reaction>
</comment>
<comment type="activity regulation">
    <text evidence="1">Allosterically activated by GTP, when glutamine is the substrate; GTP has no effect on the reaction when ammonia is the substrate. The allosteric effector GTP functions by stabilizing the protein conformation that binds the tetrahedral intermediate(s) formed during glutamine hydrolysis. Inhibited by the product CTP, via allosteric rather than competitive inhibition.</text>
</comment>
<comment type="pathway">
    <text evidence="1">Pyrimidine metabolism; CTP biosynthesis via de novo pathway; CTP from UDP: step 2/2.</text>
</comment>
<comment type="subunit">
    <text evidence="1">Homotetramer.</text>
</comment>
<comment type="miscellaneous">
    <text evidence="1">CTPSs have evolved a hybrid strategy for distinguishing between UTP and CTP. The overlapping regions of the product feedback inhibitory and substrate sites recognize a common feature in both compounds, the triphosphate moiety. To differentiate isosteric substrate and product pyrimidine rings, an additional pocket far from the expected kinase/ligase catalytic site, specifically recognizes the cytosine and ribose portions of the product inhibitor.</text>
</comment>
<comment type="similarity">
    <text evidence="1">Belongs to the CTP synthase family.</text>
</comment>
<dbReference type="EC" id="6.3.4.2" evidence="1"/>
<dbReference type="EMBL" id="U00021">
    <property type="protein sequence ID" value="AAA50916.1"/>
    <property type="molecule type" value="Genomic_DNA"/>
</dbReference>
<dbReference type="EMBL" id="Z95117">
    <property type="protein sequence ID" value="CAB08284.1"/>
    <property type="molecule type" value="Genomic_DNA"/>
</dbReference>
<dbReference type="EMBL" id="AL583921">
    <property type="protein sequence ID" value="CAC31744.1"/>
    <property type="molecule type" value="Genomic_DNA"/>
</dbReference>
<dbReference type="PIR" id="S72961">
    <property type="entry name" value="S72961"/>
</dbReference>
<dbReference type="RefSeq" id="NP_301973.1">
    <property type="nucleotide sequence ID" value="NC_002677.1"/>
</dbReference>
<dbReference type="RefSeq" id="WP_010908294.1">
    <property type="nucleotide sequence ID" value="NC_002677.1"/>
</dbReference>
<dbReference type="SMR" id="P53529"/>
<dbReference type="STRING" id="272631.gene:17575201"/>
<dbReference type="MEROPS" id="C26.964"/>
<dbReference type="KEGG" id="mle:ML1363"/>
<dbReference type="PATRIC" id="fig|272631.5.peg.2520"/>
<dbReference type="Leproma" id="ML1363"/>
<dbReference type="eggNOG" id="COG0504">
    <property type="taxonomic scope" value="Bacteria"/>
</dbReference>
<dbReference type="HOGENOM" id="CLU_011675_5_0_11"/>
<dbReference type="OrthoDB" id="9801107at2"/>
<dbReference type="UniPathway" id="UPA00159">
    <property type="reaction ID" value="UER00277"/>
</dbReference>
<dbReference type="Proteomes" id="UP000000806">
    <property type="component" value="Chromosome"/>
</dbReference>
<dbReference type="GO" id="GO:0005829">
    <property type="term" value="C:cytosol"/>
    <property type="evidence" value="ECO:0007669"/>
    <property type="project" value="TreeGrafter"/>
</dbReference>
<dbReference type="GO" id="GO:0005524">
    <property type="term" value="F:ATP binding"/>
    <property type="evidence" value="ECO:0007669"/>
    <property type="project" value="UniProtKB-KW"/>
</dbReference>
<dbReference type="GO" id="GO:0003883">
    <property type="term" value="F:CTP synthase activity"/>
    <property type="evidence" value="ECO:0007669"/>
    <property type="project" value="UniProtKB-UniRule"/>
</dbReference>
<dbReference type="GO" id="GO:0004359">
    <property type="term" value="F:glutaminase activity"/>
    <property type="evidence" value="ECO:0007669"/>
    <property type="project" value="RHEA"/>
</dbReference>
<dbReference type="GO" id="GO:0042802">
    <property type="term" value="F:identical protein binding"/>
    <property type="evidence" value="ECO:0007669"/>
    <property type="project" value="TreeGrafter"/>
</dbReference>
<dbReference type="GO" id="GO:0046872">
    <property type="term" value="F:metal ion binding"/>
    <property type="evidence" value="ECO:0007669"/>
    <property type="project" value="UniProtKB-KW"/>
</dbReference>
<dbReference type="GO" id="GO:0044210">
    <property type="term" value="P:'de novo' CTP biosynthetic process"/>
    <property type="evidence" value="ECO:0007669"/>
    <property type="project" value="UniProtKB-UniRule"/>
</dbReference>
<dbReference type="GO" id="GO:0019856">
    <property type="term" value="P:pyrimidine nucleobase biosynthetic process"/>
    <property type="evidence" value="ECO:0007669"/>
    <property type="project" value="TreeGrafter"/>
</dbReference>
<dbReference type="CDD" id="cd03113">
    <property type="entry name" value="CTPS_N"/>
    <property type="match status" value="1"/>
</dbReference>
<dbReference type="CDD" id="cd01746">
    <property type="entry name" value="GATase1_CTP_Synthase"/>
    <property type="match status" value="1"/>
</dbReference>
<dbReference type="FunFam" id="3.40.50.300:FF:000009">
    <property type="entry name" value="CTP synthase"/>
    <property type="match status" value="1"/>
</dbReference>
<dbReference type="FunFam" id="3.40.50.880:FF:000002">
    <property type="entry name" value="CTP synthase"/>
    <property type="match status" value="1"/>
</dbReference>
<dbReference type="Gene3D" id="3.40.50.880">
    <property type="match status" value="1"/>
</dbReference>
<dbReference type="Gene3D" id="3.40.50.300">
    <property type="entry name" value="P-loop containing nucleotide triphosphate hydrolases"/>
    <property type="match status" value="1"/>
</dbReference>
<dbReference type="HAMAP" id="MF_01227">
    <property type="entry name" value="PyrG"/>
    <property type="match status" value="1"/>
</dbReference>
<dbReference type="InterPro" id="IPR029062">
    <property type="entry name" value="Class_I_gatase-like"/>
</dbReference>
<dbReference type="InterPro" id="IPR004468">
    <property type="entry name" value="CTP_synthase"/>
</dbReference>
<dbReference type="InterPro" id="IPR017456">
    <property type="entry name" value="CTP_synthase_N"/>
</dbReference>
<dbReference type="InterPro" id="IPR017926">
    <property type="entry name" value="GATASE"/>
</dbReference>
<dbReference type="InterPro" id="IPR033828">
    <property type="entry name" value="GATase1_CTP_Synthase"/>
</dbReference>
<dbReference type="InterPro" id="IPR027417">
    <property type="entry name" value="P-loop_NTPase"/>
</dbReference>
<dbReference type="NCBIfam" id="NF003792">
    <property type="entry name" value="PRK05380.1"/>
    <property type="match status" value="1"/>
</dbReference>
<dbReference type="NCBIfam" id="TIGR00337">
    <property type="entry name" value="PyrG"/>
    <property type="match status" value="1"/>
</dbReference>
<dbReference type="PANTHER" id="PTHR11550">
    <property type="entry name" value="CTP SYNTHASE"/>
    <property type="match status" value="1"/>
</dbReference>
<dbReference type="PANTHER" id="PTHR11550:SF0">
    <property type="entry name" value="CTP SYNTHASE-RELATED"/>
    <property type="match status" value="1"/>
</dbReference>
<dbReference type="Pfam" id="PF06418">
    <property type="entry name" value="CTP_synth_N"/>
    <property type="match status" value="1"/>
</dbReference>
<dbReference type="Pfam" id="PF00117">
    <property type="entry name" value="GATase"/>
    <property type="match status" value="1"/>
</dbReference>
<dbReference type="SUPFAM" id="SSF52317">
    <property type="entry name" value="Class I glutamine amidotransferase-like"/>
    <property type="match status" value="1"/>
</dbReference>
<dbReference type="SUPFAM" id="SSF52540">
    <property type="entry name" value="P-loop containing nucleoside triphosphate hydrolases"/>
    <property type="match status" value="1"/>
</dbReference>
<dbReference type="PROSITE" id="PS51273">
    <property type="entry name" value="GATASE_TYPE_1"/>
    <property type="match status" value="1"/>
</dbReference>